<keyword id="KW-1185">Reference proteome</keyword>
<keyword id="KW-0687">Ribonucleoprotein</keyword>
<keyword id="KW-0689">Ribosomal protein</keyword>
<keyword id="KW-0694">RNA-binding</keyword>
<keyword id="KW-0699">rRNA-binding</keyword>
<feature type="chain" id="PRO_0000167921" description="Small ribosomal subunit protein bS20">
    <location>
        <begin position="1"/>
        <end position="84"/>
    </location>
</feature>
<comment type="function">
    <text evidence="1">Binds directly to 16S ribosomal RNA.</text>
</comment>
<comment type="similarity">
    <text evidence="1">Belongs to the bacterial ribosomal protein bS20 family.</text>
</comment>
<name>RS20_BACTN</name>
<accession>Q8A276</accession>
<organism>
    <name type="scientific">Bacteroides thetaiotaomicron (strain ATCC 29148 / DSM 2079 / JCM 5827 / CCUG 10774 / NCTC 10582 / VPI-5482 / E50)</name>
    <dbReference type="NCBI Taxonomy" id="226186"/>
    <lineage>
        <taxon>Bacteria</taxon>
        <taxon>Pseudomonadati</taxon>
        <taxon>Bacteroidota</taxon>
        <taxon>Bacteroidia</taxon>
        <taxon>Bacteroidales</taxon>
        <taxon>Bacteroidaceae</taxon>
        <taxon>Bacteroides</taxon>
    </lineage>
</organism>
<sequence length="84" mass="9797">MANHKSSLKRIRQEETRRLHNRYYGKTMRNAVRKLRATTDKKEAVAMYPGITKMLDKLAKTNVIHKNKANNLKSKLALYINKLA</sequence>
<protein>
    <recommendedName>
        <fullName evidence="1">Small ribosomal subunit protein bS20</fullName>
    </recommendedName>
    <alternativeName>
        <fullName evidence="2">30S ribosomal protein S20</fullName>
    </alternativeName>
</protein>
<dbReference type="EMBL" id="AE015928">
    <property type="protein sequence ID" value="AAO78536.1"/>
    <property type="molecule type" value="Genomic_DNA"/>
</dbReference>
<dbReference type="RefSeq" id="NP_812342.1">
    <property type="nucleotide sequence ID" value="NC_004663.1"/>
</dbReference>
<dbReference type="RefSeq" id="WP_008767624.1">
    <property type="nucleotide sequence ID" value="NC_004663.1"/>
</dbReference>
<dbReference type="SMR" id="Q8A276"/>
<dbReference type="FunCoup" id="Q8A276">
    <property type="interactions" value="521"/>
</dbReference>
<dbReference type="STRING" id="226186.BT_3430"/>
<dbReference type="PaxDb" id="226186-BT_3430"/>
<dbReference type="EnsemblBacteria" id="AAO78536">
    <property type="protein sequence ID" value="AAO78536"/>
    <property type="gene ID" value="BT_3430"/>
</dbReference>
<dbReference type="GeneID" id="60924609"/>
<dbReference type="KEGG" id="bth:BT_3430"/>
<dbReference type="PATRIC" id="fig|226186.12.peg.3495"/>
<dbReference type="eggNOG" id="COG0268">
    <property type="taxonomic scope" value="Bacteria"/>
</dbReference>
<dbReference type="HOGENOM" id="CLU_160655_3_2_10"/>
<dbReference type="InParanoid" id="Q8A276"/>
<dbReference type="OrthoDB" id="9808392at2"/>
<dbReference type="Proteomes" id="UP000001414">
    <property type="component" value="Chromosome"/>
</dbReference>
<dbReference type="GO" id="GO:0005829">
    <property type="term" value="C:cytosol"/>
    <property type="evidence" value="ECO:0000318"/>
    <property type="project" value="GO_Central"/>
</dbReference>
<dbReference type="GO" id="GO:0015935">
    <property type="term" value="C:small ribosomal subunit"/>
    <property type="evidence" value="ECO:0000318"/>
    <property type="project" value="GO_Central"/>
</dbReference>
<dbReference type="GO" id="GO:0070181">
    <property type="term" value="F:small ribosomal subunit rRNA binding"/>
    <property type="evidence" value="ECO:0000318"/>
    <property type="project" value="GO_Central"/>
</dbReference>
<dbReference type="GO" id="GO:0003735">
    <property type="term" value="F:structural constituent of ribosome"/>
    <property type="evidence" value="ECO:0007669"/>
    <property type="project" value="InterPro"/>
</dbReference>
<dbReference type="GO" id="GO:0006412">
    <property type="term" value="P:translation"/>
    <property type="evidence" value="ECO:0007669"/>
    <property type="project" value="UniProtKB-UniRule"/>
</dbReference>
<dbReference type="FunFam" id="1.20.58.110:FF:000002">
    <property type="entry name" value="30S ribosomal protein S20"/>
    <property type="match status" value="1"/>
</dbReference>
<dbReference type="Gene3D" id="1.20.58.110">
    <property type="entry name" value="Ribosomal protein S20"/>
    <property type="match status" value="1"/>
</dbReference>
<dbReference type="HAMAP" id="MF_00500">
    <property type="entry name" value="Ribosomal_bS20"/>
    <property type="match status" value="1"/>
</dbReference>
<dbReference type="InterPro" id="IPR002583">
    <property type="entry name" value="Ribosomal_bS20"/>
</dbReference>
<dbReference type="InterPro" id="IPR036510">
    <property type="entry name" value="Ribosomal_bS20_sf"/>
</dbReference>
<dbReference type="NCBIfam" id="TIGR00029">
    <property type="entry name" value="S20"/>
    <property type="match status" value="1"/>
</dbReference>
<dbReference type="PANTHER" id="PTHR33398">
    <property type="entry name" value="30S RIBOSOMAL PROTEIN S20"/>
    <property type="match status" value="1"/>
</dbReference>
<dbReference type="PANTHER" id="PTHR33398:SF1">
    <property type="entry name" value="SMALL RIBOSOMAL SUBUNIT PROTEIN BS20C"/>
    <property type="match status" value="1"/>
</dbReference>
<dbReference type="Pfam" id="PF01649">
    <property type="entry name" value="Ribosomal_S20p"/>
    <property type="match status" value="1"/>
</dbReference>
<dbReference type="SUPFAM" id="SSF46992">
    <property type="entry name" value="Ribosomal protein S20"/>
    <property type="match status" value="1"/>
</dbReference>
<evidence type="ECO:0000255" key="1">
    <source>
        <dbReference type="HAMAP-Rule" id="MF_00500"/>
    </source>
</evidence>
<evidence type="ECO:0000305" key="2"/>
<proteinExistence type="inferred from homology"/>
<reference key="1">
    <citation type="journal article" date="2003" name="Science">
        <title>A genomic view of the human-Bacteroides thetaiotaomicron symbiosis.</title>
        <authorList>
            <person name="Xu J."/>
            <person name="Bjursell M.K."/>
            <person name="Himrod J."/>
            <person name="Deng S."/>
            <person name="Carmichael L.K."/>
            <person name="Chiang H.C."/>
            <person name="Hooper L.V."/>
            <person name="Gordon J.I."/>
        </authorList>
    </citation>
    <scope>NUCLEOTIDE SEQUENCE [LARGE SCALE GENOMIC DNA]</scope>
    <source>
        <strain>ATCC 29148 / DSM 2079 / JCM 5827 / CCUG 10774 / NCTC 10582 / VPI-5482 / E50</strain>
    </source>
</reference>
<gene>
    <name evidence="1" type="primary">rpsT</name>
    <name type="ordered locus">BT_3430</name>
</gene>